<organism>
    <name type="scientific">Homo sapiens</name>
    <name type="common">Human</name>
    <dbReference type="NCBI Taxonomy" id="9606"/>
    <lineage>
        <taxon>Eukaryota</taxon>
        <taxon>Metazoa</taxon>
        <taxon>Chordata</taxon>
        <taxon>Craniata</taxon>
        <taxon>Vertebrata</taxon>
        <taxon>Euteleostomi</taxon>
        <taxon>Mammalia</taxon>
        <taxon>Eutheria</taxon>
        <taxon>Euarchontoglires</taxon>
        <taxon>Primates</taxon>
        <taxon>Haplorrhini</taxon>
        <taxon>Catarrhini</taxon>
        <taxon>Hominidae</taxon>
        <taxon>Homo</taxon>
    </lineage>
</organism>
<dbReference type="EMBL" id="AF246971">
    <property type="protein sequence ID" value="AAF64061.1"/>
    <property type="molecule type" value="mRNA"/>
</dbReference>
<dbReference type="EMBL" id="AF245703">
    <property type="protein sequence ID" value="AAF78036.1"/>
    <property type="molecule type" value="mRNA"/>
</dbReference>
<dbReference type="EMBL" id="AB445666">
    <property type="protein sequence ID" value="BAG55063.1"/>
    <property type="molecule type" value="mRNA"/>
</dbReference>
<dbReference type="EMBL" id="DQ023132">
    <property type="protein sequence ID" value="AAZ95433.1"/>
    <property type="molecule type" value="Genomic_DNA"/>
</dbReference>
<dbReference type="EMBL" id="DQ023133">
    <property type="protein sequence ID" value="AAZ95434.1"/>
    <property type="molecule type" value="Genomic_DNA"/>
</dbReference>
<dbReference type="EMBL" id="DQ023134">
    <property type="protein sequence ID" value="AAZ95435.1"/>
    <property type="molecule type" value="Genomic_DNA"/>
</dbReference>
<dbReference type="EMBL" id="DQ023135">
    <property type="protein sequence ID" value="AAZ95436.1"/>
    <property type="molecule type" value="Genomic_DNA"/>
</dbReference>
<dbReference type="EMBL" id="DQ023136">
    <property type="protein sequence ID" value="AAZ95437.1"/>
    <property type="molecule type" value="Genomic_DNA"/>
</dbReference>
<dbReference type="EMBL" id="DQ023137">
    <property type="protein sequence ID" value="AAZ95438.1"/>
    <property type="molecule type" value="Genomic_DNA"/>
</dbReference>
<dbReference type="EMBL" id="DQ023138">
    <property type="protein sequence ID" value="AAZ95439.1"/>
    <property type="molecule type" value="Genomic_DNA"/>
</dbReference>
<dbReference type="EMBL" id="DQ023139">
    <property type="protein sequence ID" value="AAZ95440.1"/>
    <property type="molecule type" value="Genomic_DNA"/>
</dbReference>
<dbReference type="EMBL" id="DQ023140">
    <property type="protein sequence ID" value="AAZ95441.1"/>
    <property type="molecule type" value="Genomic_DNA"/>
</dbReference>
<dbReference type="EMBL" id="CH471074">
    <property type="protein sequence ID" value="EAW98808.1"/>
    <property type="molecule type" value="Genomic_DNA"/>
</dbReference>
<dbReference type="EMBL" id="AY358296">
    <property type="protein sequence ID" value="AAQ88663.1"/>
    <property type="molecule type" value="mRNA"/>
</dbReference>
<dbReference type="EMBL" id="AC005859">
    <property type="status" value="NOT_ANNOTATED_CDS"/>
    <property type="molecule type" value="Genomic_DNA"/>
</dbReference>
<dbReference type="EMBL" id="AC139705">
    <property type="status" value="NOT_ANNOTATED_CDS"/>
    <property type="molecule type" value="Genomic_DNA"/>
</dbReference>
<dbReference type="EMBL" id="CH471074">
    <property type="protein sequence ID" value="EAW98809.1"/>
    <property type="molecule type" value="Genomic_DNA"/>
</dbReference>
<dbReference type="EMBL" id="BC101076">
    <property type="protein sequence ID" value="AAI01077.1"/>
    <property type="molecule type" value="mRNA"/>
</dbReference>
<dbReference type="EMBL" id="BC101077">
    <property type="protein sequence ID" value="AAI01078.1"/>
    <property type="molecule type" value="mRNA"/>
</dbReference>
<dbReference type="CCDS" id="CCDS14152.1">
    <molecule id="Q9NR97-1"/>
</dbReference>
<dbReference type="CCDS" id="CCDS14153.1">
    <molecule id="Q9NR97-2"/>
</dbReference>
<dbReference type="RefSeq" id="NP_057694.2">
    <molecule id="Q9NR97-2"/>
    <property type="nucleotide sequence ID" value="NM_016610.3"/>
</dbReference>
<dbReference type="RefSeq" id="NP_619542.1">
    <molecule id="Q9NR97-1"/>
    <property type="nucleotide sequence ID" value="NM_138636.5"/>
</dbReference>
<dbReference type="RefSeq" id="XP_011543831.1">
    <property type="nucleotide sequence ID" value="XM_011545529.1"/>
</dbReference>
<dbReference type="RefSeq" id="XP_011543832.1">
    <property type="nucleotide sequence ID" value="XM_011545530.2"/>
</dbReference>
<dbReference type="PDB" id="3W3G">
    <property type="method" value="X-ray"/>
    <property type="resolution" value="2.30 A"/>
    <property type="chains" value="A/B=27-827"/>
</dbReference>
<dbReference type="PDB" id="3W3J">
    <property type="method" value="X-ray"/>
    <property type="resolution" value="2.00 A"/>
    <property type="chains" value="A/B=27-827"/>
</dbReference>
<dbReference type="PDB" id="3W3K">
    <property type="method" value="X-ray"/>
    <property type="resolution" value="2.30 A"/>
    <property type="chains" value="A/B=27-827"/>
</dbReference>
<dbReference type="PDB" id="3W3L">
    <property type="method" value="X-ray"/>
    <property type="resolution" value="2.33 A"/>
    <property type="chains" value="A/B/C/D=27-827"/>
</dbReference>
<dbReference type="PDB" id="3W3M">
    <property type="method" value="X-ray"/>
    <property type="resolution" value="2.70 A"/>
    <property type="chains" value="A=27-827"/>
</dbReference>
<dbReference type="PDB" id="3W3N">
    <property type="method" value="X-ray"/>
    <property type="resolution" value="2.10 A"/>
    <property type="chains" value="A/B=27-827"/>
</dbReference>
<dbReference type="PDB" id="3WN4">
    <property type="method" value="X-ray"/>
    <property type="resolution" value="1.81 A"/>
    <property type="chains" value="A=27-827"/>
</dbReference>
<dbReference type="PDB" id="4QBZ">
    <property type="method" value="X-ray"/>
    <property type="resolution" value="2.00 A"/>
    <property type="chains" value="A/B=27-827"/>
</dbReference>
<dbReference type="PDB" id="4QC0">
    <property type="method" value="X-ray"/>
    <property type="resolution" value="2.10 A"/>
    <property type="chains" value="A/B=27-827"/>
</dbReference>
<dbReference type="PDB" id="4R07">
    <property type="method" value="X-ray"/>
    <property type="resolution" value="2.00 A"/>
    <property type="chains" value="A/B/C/D=27-827"/>
</dbReference>
<dbReference type="PDB" id="4R08">
    <property type="method" value="X-ray"/>
    <property type="resolution" value="2.40 A"/>
    <property type="chains" value="A/B/C/D=27-827"/>
</dbReference>
<dbReference type="PDB" id="4R09">
    <property type="method" value="X-ray"/>
    <property type="resolution" value="2.62 A"/>
    <property type="chains" value="A/B/C/D=27-827"/>
</dbReference>
<dbReference type="PDB" id="4R0A">
    <property type="method" value="X-ray"/>
    <property type="resolution" value="1.90 A"/>
    <property type="chains" value="A=27-827"/>
</dbReference>
<dbReference type="PDB" id="4R6A">
    <property type="method" value="X-ray"/>
    <property type="resolution" value="2.10 A"/>
    <property type="chains" value="A/B=27-827"/>
</dbReference>
<dbReference type="PDB" id="5AWA">
    <property type="method" value="X-ray"/>
    <property type="resolution" value="2.20 A"/>
    <property type="chains" value="A=27-827"/>
</dbReference>
<dbReference type="PDB" id="5AWB">
    <property type="method" value="X-ray"/>
    <property type="resolution" value="2.10 A"/>
    <property type="chains" value="A=27-827"/>
</dbReference>
<dbReference type="PDB" id="5AWC">
    <property type="method" value="X-ray"/>
    <property type="resolution" value="2.50 A"/>
    <property type="chains" value="A/B/C/D=27-827"/>
</dbReference>
<dbReference type="PDB" id="5AWD">
    <property type="method" value="X-ray"/>
    <property type="resolution" value="2.05 A"/>
    <property type="chains" value="A=27-827"/>
</dbReference>
<dbReference type="PDB" id="5AZ5">
    <property type="method" value="X-ray"/>
    <property type="resolution" value="2.40 A"/>
    <property type="chains" value="A/B/C/D=27-827"/>
</dbReference>
<dbReference type="PDB" id="5HDH">
    <property type="method" value="X-ray"/>
    <property type="resolution" value="2.60 A"/>
    <property type="chains" value="A=27-827"/>
</dbReference>
<dbReference type="PDB" id="5WYX">
    <property type="method" value="X-ray"/>
    <property type="resolution" value="2.40 A"/>
    <property type="chains" value="A/B=27-827"/>
</dbReference>
<dbReference type="PDB" id="5WYZ">
    <property type="method" value="X-ray"/>
    <property type="resolution" value="2.30 A"/>
    <property type="chains" value="A/B=27-827"/>
</dbReference>
<dbReference type="PDB" id="5Z14">
    <property type="method" value="X-ray"/>
    <property type="resolution" value="2.80 A"/>
    <property type="chains" value="A/B=27-827"/>
</dbReference>
<dbReference type="PDB" id="5Z15">
    <property type="method" value="X-ray"/>
    <property type="resolution" value="2.90 A"/>
    <property type="chains" value="A/B=27-827"/>
</dbReference>
<dbReference type="PDB" id="6KYA">
    <property type="method" value="X-ray"/>
    <property type="resolution" value="2.89 A"/>
    <property type="chains" value="A/B=27-827"/>
</dbReference>
<dbReference type="PDB" id="6TY5">
    <property type="method" value="X-ray"/>
    <property type="resolution" value="2.79 A"/>
    <property type="chains" value="A/B=27-827"/>
</dbReference>
<dbReference type="PDB" id="6V9U">
    <property type="method" value="X-ray"/>
    <property type="resolution" value="2.65 A"/>
    <property type="chains" value="A/B=27-827"/>
</dbReference>
<dbReference type="PDB" id="6WML">
    <property type="method" value="X-ray"/>
    <property type="resolution" value="2.50 A"/>
    <property type="chains" value="A/B/C/D=27-827"/>
</dbReference>
<dbReference type="PDB" id="6ZJZ">
    <property type="method" value="X-ray"/>
    <property type="resolution" value="2.49 A"/>
    <property type="chains" value="A/B=27-827"/>
</dbReference>
<dbReference type="PDB" id="7CRF">
    <property type="method" value="X-ray"/>
    <property type="resolution" value="2.89 A"/>
    <property type="chains" value="A/B=27-827"/>
</dbReference>
<dbReference type="PDB" id="7R52">
    <property type="method" value="X-ray"/>
    <property type="resolution" value="2.94 A"/>
    <property type="chains" value="A/B=27-827"/>
</dbReference>
<dbReference type="PDB" id="7R53">
    <property type="method" value="X-ray"/>
    <property type="resolution" value="3.12 A"/>
    <property type="chains" value="A/B=27-827"/>
</dbReference>
<dbReference type="PDB" id="7R54">
    <property type="method" value="X-ray"/>
    <property type="resolution" value="2.84 A"/>
    <property type="chains" value="A/B=27-827"/>
</dbReference>
<dbReference type="PDB" id="7RC9">
    <property type="method" value="X-ray"/>
    <property type="resolution" value="2.76 A"/>
    <property type="chains" value="A/B=27-827"/>
</dbReference>
<dbReference type="PDB" id="7YTX">
    <property type="method" value="X-ray"/>
    <property type="resolution" value="2.90 A"/>
    <property type="chains" value="A/B=27-827"/>
</dbReference>
<dbReference type="PDB" id="8PFI">
    <property type="method" value="X-ray"/>
    <property type="resolution" value="2.79 A"/>
    <property type="chains" value="A/B=27-827"/>
</dbReference>
<dbReference type="PDB" id="9MHW">
    <property type="method" value="X-ray"/>
    <property type="resolution" value="1.52 A"/>
    <property type="chains" value="A=27-827"/>
</dbReference>
<dbReference type="PDB" id="9MHX">
    <property type="method" value="X-ray"/>
    <property type="resolution" value="2.13 A"/>
    <property type="chains" value="A/B=27-827"/>
</dbReference>
<dbReference type="PDB" id="9MHY">
    <property type="method" value="X-ray"/>
    <property type="resolution" value="1.66 A"/>
    <property type="chains" value="A/B=27-827"/>
</dbReference>
<dbReference type="PDBsum" id="3W3G"/>
<dbReference type="PDBsum" id="3W3J"/>
<dbReference type="PDBsum" id="3W3K"/>
<dbReference type="PDBsum" id="3W3L"/>
<dbReference type="PDBsum" id="3W3M"/>
<dbReference type="PDBsum" id="3W3N"/>
<dbReference type="PDBsum" id="3WN4"/>
<dbReference type="PDBsum" id="4QBZ"/>
<dbReference type="PDBsum" id="4QC0"/>
<dbReference type="PDBsum" id="4R07"/>
<dbReference type="PDBsum" id="4R08"/>
<dbReference type="PDBsum" id="4R09"/>
<dbReference type="PDBsum" id="4R0A"/>
<dbReference type="PDBsum" id="4R6A"/>
<dbReference type="PDBsum" id="5AWA"/>
<dbReference type="PDBsum" id="5AWB"/>
<dbReference type="PDBsum" id="5AWC"/>
<dbReference type="PDBsum" id="5AWD"/>
<dbReference type="PDBsum" id="5AZ5"/>
<dbReference type="PDBsum" id="5HDH"/>
<dbReference type="PDBsum" id="5WYX"/>
<dbReference type="PDBsum" id="5WYZ"/>
<dbReference type="PDBsum" id="5Z14"/>
<dbReference type="PDBsum" id="5Z15"/>
<dbReference type="PDBsum" id="6KYA"/>
<dbReference type="PDBsum" id="6TY5"/>
<dbReference type="PDBsum" id="6V9U"/>
<dbReference type="PDBsum" id="6WML"/>
<dbReference type="PDBsum" id="6ZJZ"/>
<dbReference type="PDBsum" id="7CRF"/>
<dbReference type="PDBsum" id="7R52"/>
<dbReference type="PDBsum" id="7R53"/>
<dbReference type="PDBsum" id="7R54"/>
<dbReference type="PDBsum" id="7RC9"/>
<dbReference type="PDBsum" id="7YTX"/>
<dbReference type="PDBsum" id="8PFI"/>
<dbReference type="PDBsum" id="9MHW"/>
<dbReference type="PDBsum" id="9MHX"/>
<dbReference type="PDBsum" id="9MHY"/>
<dbReference type="SMR" id="Q9NR97"/>
<dbReference type="BioGRID" id="119462">
    <property type="interactions" value="8"/>
</dbReference>
<dbReference type="DIP" id="DIP-61413N"/>
<dbReference type="FunCoup" id="Q9NR97">
    <property type="interactions" value="119"/>
</dbReference>
<dbReference type="IntAct" id="Q9NR97">
    <property type="interactions" value="9"/>
</dbReference>
<dbReference type="STRING" id="9606.ENSP00000312082"/>
<dbReference type="BindingDB" id="Q9NR97"/>
<dbReference type="ChEMBL" id="CHEMBL5805"/>
<dbReference type="DrugBank" id="DB16580">
    <property type="generic name" value="Afimetoran"/>
</dbReference>
<dbReference type="DrugBank" id="DB00724">
    <property type="generic name" value="Imiquimod"/>
</dbReference>
<dbReference type="DrugBank" id="DB12303">
    <property type="generic name" value="Motolimod"/>
</dbReference>
<dbReference type="DrugBank" id="DB06530">
    <property type="generic name" value="Resiquimod"/>
</dbReference>
<dbReference type="DrugBank" id="DB16324">
    <property type="generic name" value="Selgantolimod"/>
</dbReference>
<dbReference type="GuidetoPHARMACOLOGY" id="1758"/>
<dbReference type="GlyCosmos" id="Q9NR97">
    <property type="glycosylation" value="21 sites, No reported glycans"/>
</dbReference>
<dbReference type="GlyGen" id="Q9NR97">
    <property type="glycosylation" value="25 sites, 8 N-linked glycans (4 sites), 1 O-linked glycan (1 site)"/>
</dbReference>
<dbReference type="iPTMnet" id="Q9NR97"/>
<dbReference type="PhosphoSitePlus" id="Q9NR97"/>
<dbReference type="BioMuta" id="TLR8"/>
<dbReference type="DMDM" id="20140873"/>
<dbReference type="CPTAC" id="CPTAC-2235"/>
<dbReference type="jPOST" id="Q9NR97"/>
<dbReference type="MassIVE" id="Q9NR97"/>
<dbReference type="PaxDb" id="9606-ENSP00000312082"/>
<dbReference type="PeptideAtlas" id="Q9NR97"/>
<dbReference type="ProteomicsDB" id="12724"/>
<dbReference type="ProteomicsDB" id="82313">
    <molecule id="Q9NR97-1"/>
</dbReference>
<dbReference type="Antibodypedia" id="458">
    <property type="antibodies" value="864 antibodies from 42 providers"/>
</dbReference>
<dbReference type="DNASU" id="51311"/>
<dbReference type="Ensembl" id="ENST00000218032.7">
    <molecule id="Q9NR97-1"/>
    <property type="protein sequence ID" value="ENSP00000218032.7"/>
    <property type="gene ID" value="ENSG00000101916.12"/>
</dbReference>
<dbReference type="Ensembl" id="ENST00000311912.5">
    <molecule id="Q9NR97-2"/>
    <property type="protein sequence ID" value="ENSP00000312082.5"/>
    <property type="gene ID" value="ENSG00000101916.12"/>
</dbReference>
<dbReference type="GeneID" id="51311"/>
<dbReference type="KEGG" id="hsa:51311"/>
<dbReference type="MANE-Select" id="ENST00000218032.7">
    <property type="protein sequence ID" value="ENSP00000218032.7"/>
    <property type="RefSeq nucleotide sequence ID" value="NM_138636.5"/>
    <property type="RefSeq protein sequence ID" value="NP_619542.1"/>
</dbReference>
<dbReference type="UCSC" id="uc004cvd.4">
    <molecule id="Q9NR97-1"/>
    <property type="organism name" value="human"/>
</dbReference>
<dbReference type="AGR" id="HGNC:15632"/>
<dbReference type="CTD" id="51311"/>
<dbReference type="DisGeNET" id="51311"/>
<dbReference type="GeneCards" id="TLR8"/>
<dbReference type="HGNC" id="HGNC:15632">
    <property type="gene designation" value="TLR8"/>
</dbReference>
<dbReference type="HPA" id="ENSG00000101916">
    <property type="expression patterns" value="Tissue enhanced (lung, lymphoid tissue)"/>
</dbReference>
<dbReference type="MalaCards" id="TLR8"/>
<dbReference type="MIM" id="300366">
    <property type="type" value="gene"/>
</dbReference>
<dbReference type="MIM" id="301078">
    <property type="type" value="phenotype"/>
</dbReference>
<dbReference type="neXtProt" id="NX_Q9NR97"/>
<dbReference type="OpenTargets" id="ENSG00000101916"/>
<dbReference type="Orphanet" id="675628">
    <property type="disease" value="TLR8-related inflammation-severe neutropenia-bone marrow failure-lymphoproliferation syndrome"/>
</dbReference>
<dbReference type="PharmGKB" id="PA38009"/>
<dbReference type="VEuPathDB" id="HostDB:ENSG00000101916"/>
<dbReference type="eggNOG" id="KOG4641">
    <property type="taxonomic scope" value="Eukaryota"/>
</dbReference>
<dbReference type="GeneTree" id="ENSGT00940000160879"/>
<dbReference type="HOGENOM" id="CLU_006000_2_0_1"/>
<dbReference type="InParanoid" id="Q9NR97"/>
<dbReference type="OMA" id="LSWNCYF"/>
<dbReference type="OrthoDB" id="10006997at2759"/>
<dbReference type="PAN-GO" id="Q9NR97">
    <property type="GO annotations" value="6 GO annotations based on evolutionary models"/>
</dbReference>
<dbReference type="PhylomeDB" id="Q9NR97"/>
<dbReference type="TreeFam" id="TF351113"/>
<dbReference type="PathwayCommons" id="Q9NR97"/>
<dbReference type="Reactome" id="R-HSA-1679131">
    <property type="pathway name" value="Trafficking and processing of endosomal TLR"/>
</dbReference>
<dbReference type="Reactome" id="R-HSA-168181">
    <property type="pathway name" value="Toll Like Receptor 7/8 (TLR7/8) Cascade"/>
</dbReference>
<dbReference type="Reactome" id="R-HSA-9705671">
    <property type="pathway name" value="SARS-CoV-2 activates/modulates innate and adaptive immune responses"/>
</dbReference>
<dbReference type="SignaLink" id="Q9NR97"/>
<dbReference type="SIGNOR" id="Q9NR97"/>
<dbReference type="BioGRID-ORCS" id="51311">
    <property type="hits" value="14 hits in 775 CRISPR screens"/>
</dbReference>
<dbReference type="ChiTaRS" id="TLR8">
    <property type="organism name" value="human"/>
</dbReference>
<dbReference type="EvolutionaryTrace" id="Q9NR97"/>
<dbReference type="GeneWiki" id="TLR8"/>
<dbReference type="GenomeRNAi" id="51311"/>
<dbReference type="Pharos" id="Q9NR97">
    <property type="development level" value="Tchem"/>
</dbReference>
<dbReference type="PRO" id="PR:Q9NR97"/>
<dbReference type="Proteomes" id="UP000005640">
    <property type="component" value="Chromosome X"/>
</dbReference>
<dbReference type="RNAct" id="Q9NR97">
    <property type="molecule type" value="protein"/>
</dbReference>
<dbReference type="Bgee" id="ENSG00000101916">
    <property type="expression patterns" value="Expressed in monocyte and 124 other cell types or tissues"/>
</dbReference>
<dbReference type="GO" id="GO:0036020">
    <property type="term" value="C:endolysosome membrane"/>
    <property type="evidence" value="ECO:0000304"/>
    <property type="project" value="Reactome"/>
</dbReference>
<dbReference type="GO" id="GO:0005789">
    <property type="term" value="C:endoplasmic reticulum membrane"/>
    <property type="evidence" value="ECO:0000304"/>
    <property type="project" value="Reactome"/>
</dbReference>
<dbReference type="GO" id="GO:0010008">
    <property type="term" value="C:endosome membrane"/>
    <property type="evidence" value="ECO:0000304"/>
    <property type="project" value="Reactome"/>
</dbReference>
<dbReference type="GO" id="GO:0009897">
    <property type="term" value="C:external side of plasma membrane"/>
    <property type="evidence" value="ECO:0000314"/>
    <property type="project" value="CAFA"/>
</dbReference>
<dbReference type="GO" id="GO:0000139">
    <property type="term" value="C:Golgi membrane"/>
    <property type="evidence" value="ECO:0000304"/>
    <property type="project" value="Reactome"/>
</dbReference>
<dbReference type="GO" id="GO:0005886">
    <property type="term" value="C:plasma membrane"/>
    <property type="evidence" value="ECO:0000318"/>
    <property type="project" value="GO_Central"/>
</dbReference>
<dbReference type="GO" id="GO:0003677">
    <property type="term" value="F:DNA binding"/>
    <property type="evidence" value="ECO:0000314"/>
    <property type="project" value="UniProtKB"/>
</dbReference>
<dbReference type="GO" id="GO:0003725">
    <property type="term" value="F:double-stranded RNA binding"/>
    <property type="evidence" value="ECO:0000314"/>
    <property type="project" value="UniProtKB"/>
</dbReference>
<dbReference type="GO" id="GO:0042802">
    <property type="term" value="F:identical protein binding"/>
    <property type="evidence" value="ECO:0000353"/>
    <property type="project" value="IntAct"/>
</dbReference>
<dbReference type="GO" id="GO:0038187">
    <property type="term" value="F:pattern recognition receptor activity"/>
    <property type="evidence" value="ECO:0000318"/>
    <property type="project" value="GO_Central"/>
</dbReference>
<dbReference type="GO" id="GO:0003723">
    <property type="term" value="F:RNA binding"/>
    <property type="evidence" value="ECO:0000304"/>
    <property type="project" value="UniProtKB"/>
</dbReference>
<dbReference type="GO" id="GO:0038023">
    <property type="term" value="F:signaling receptor activity"/>
    <property type="evidence" value="ECO:0000303"/>
    <property type="project" value="UniProtKB"/>
</dbReference>
<dbReference type="GO" id="GO:0003727">
    <property type="term" value="F:single-stranded RNA binding"/>
    <property type="evidence" value="ECO:0000314"/>
    <property type="project" value="UniProtKB"/>
</dbReference>
<dbReference type="GO" id="GO:0007249">
    <property type="term" value="P:canonical NF-kappaB signal transduction"/>
    <property type="evidence" value="ECO:0000318"/>
    <property type="project" value="GO_Central"/>
</dbReference>
<dbReference type="GO" id="GO:0071260">
    <property type="term" value="P:cellular response to mechanical stimulus"/>
    <property type="evidence" value="ECO:0000270"/>
    <property type="project" value="UniProtKB"/>
</dbReference>
<dbReference type="GO" id="GO:0051607">
    <property type="term" value="P:defense response to virus"/>
    <property type="evidence" value="ECO:0000314"/>
    <property type="project" value="UniProtKB"/>
</dbReference>
<dbReference type="GO" id="GO:0016064">
    <property type="term" value="P:immunoglobulin mediated immune response"/>
    <property type="evidence" value="ECO:0000304"/>
    <property type="project" value="UniProtKB"/>
</dbReference>
<dbReference type="GO" id="GO:0006954">
    <property type="term" value="P:inflammatory response"/>
    <property type="evidence" value="ECO:0007669"/>
    <property type="project" value="UniProtKB-KW"/>
</dbReference>
<dbReference type="GO" id="GO:0045087">
    <property type="term" value="P:innate immune response"/>
    <property type="evidence" value="ECO:0000303"/>
    <property type="project" value="UniProtKB"/>
</dbReference>
<dbReference type="GO" id="GO:0032695">
    <property type="term" value="P:negative regulation of interleukin-12 production"/>
    <property type="evidence" value="ECO:0000314"/>
    <property type="project" value="CAFA"/>
</dbReference>
<dbReference type="GO" id="GO:0043123">
    <property type="term" value="P:positive regulation of canonical NF-kappaB signal transduction"/>
    <property type="evidence" value="ECO:0000314"/>
    <property type="project" value="UniProtKB"/>
</dbReference>
<dbReference type="GO" id="GO:0045089">
    <property type="term" value="P:positive regulation of innate immune response"/>
    <property type="evidence" value="ECO:0000314"/>
    <property type="project" value="UniProtKB"/>
</dbReference>
<dbReference type="GO" id="GO:0032727">
    <property type="term" value="P:positive regulation of interferon-alpha production"/>
    <property type="evidence" value="ECO:0000314"/>
    <property type="project" value="UniProtKB"/>
</dbReference>
<dbReference type="GO" id="GO:0032728">
    <property type="term" value="P:positive regulation of interferon-beta production"/>
    <property type="evidence" value="ECO:0000314"/>
    <property type="project" value="UniProtKB"/>
</dbReference>
<dbReference type="GO" id="GO:0032731">
    <property type="term" value="P:positive regulation of interleukin-1 beta production"/>
    <property type="evidence" value="ECO:0000314"/>
    <property type="project" value="UniProtKB"/>
</dbReference>
<dbReference type="GO" id="GO:0032755">
    <property type="term" value="P:positive regulation of interleukin-6 production"/>
    <property type="evidence" value="ECO:0000314"/>
    <property type="project" value="CAFA"/>
</dbReference>
<dbReference type="GO" id="GO:0032757">
    <property type="term" value="P:positive regulation of interleukin-8 production"/>
    <property type="evidence" value="ECO:0000315"/>
    <property type="project" value="UniProtKB"/>
</dbReference>
<dbReference type="GO" id="GO:0032729">
    <property type="term" value="P:positive regulation of type II interferon production"/>
    <property type="evidence" value="ECO:0000314"/>
    <property type="project" value="UniProtKB"/>
</dbReference>
<dbReference type="GO" id="GO:0009615">
    <property type="term" value="P:response to virus"/>
    <property type="evidence" value="ECO:0000314"/>
    <property type="project" value="UniProtKB"/>
</dbReference>
<dbReference type="GO" id="GO:0034158">
    <property type="term" value="P:toll-like receptor 8 signaling pathway"/>
    <property type="evidence" value="ECO:0000314"/>
    <property type="project" value="UniProtKB"/>
</dbReference>
<dbReference type="GO" id="GO:0002224">
    <property type="term" value="P:toll-like receptor signaling pathway"/>
    <property type="evidence" value="ECO:0000318"/>
    <property type="project" value="GO_Central"/>
</dbReference>
<dbReference type="FunFam" id="3.40.50.10140:FF:000003">
    <property type="entry name" value="Toll-like receptor 7"/>
    <property type="match status" value="1"/>
</dbReference>
<dbReference type="FunFam" id="3.80.10.10:FF:000037">
    <property type="entry name" value="Toll-like receptor 7"/>
    <property type="match status" value="1"/>
</dbReference>
<dbReference type="Gene3D" id="3.80.10.10">
    <property type="entry name" value="Ribonuclease Inhibitor"/>
    <property type="match status" value="1"/>
</dbReference>
<dbReference type="Gene3D" id="3.40.50.10140">
    <property type="entry name" value="Toll/interleukin-1 receptor homology (TIR) domain"/>
    <property type="match status" value="1"/>
</dbReference>
<dbReference type="InterPro" id="IPR000483">
    <property type="entry name" value="Cys-rich_flank_reg_C"/>
</dbReference>
<dbReference type="InterPro" id="IPR001611">
    <property type="entry name" value="Leu-rich_rpt"/>
</dbReference>
<dbReference type="InterPro" id="IPR003591">
    <property type="entry name" value="Leu-rich_rpt_typical-subtyp"/>
</dbReference>
<dbReference type="InterPro" id="IPR032675">
    <property type="entry name" value="LRR_dom_sf"/>
</dbReference>
<dbReference type="InterPro" id="IPR000157">
    <property type="entry name" value="TIR_dom"/>
</dbReference>
<dbReference type="InterPro" id="IPR035897">
    <property type="entry name" value="Toll_tir_struct_dom_sf"/>
</dbReference>
<dbReference type="PANTHER" id="PTHR47410">
    <property type="entry name" value="TOLL-LIKE RECEPTOR 7-RELATED"/>
    <property type="match status" value="1"/>
</dbReference>
<dbReference type="PANTHER" id="PTHR47410:SF1">
    <property type="entry name" value="TOLL-LIKE RECEPTOR 8"/>
    <property type="match status" value="1"/>
</dbReference>
<dbReference type="Pfam" id="PF13855">
    <property type="entry name" value="LRR_8"/>
    <property type="match status" value="5"/>
</dbReference>
<dbReference type="Pfam" id="PF01582">
    <property type="entry name" value="TIR"/>
    <property type="match status" value="1"/>
</dbReference>
<dbReference type="SMART" id="SM00365">
    <property type="entry name" value="LRR_SD22"/>
    <property type="match status" value="9"/>
</dbReference>
<dbReference type="SMART" id="SM00369">
    <property type="entry name" value="LRR_TYP"/>
    <property type="match status" value="15"/>
</dbReference>
<dbReference type="SMART" id="SM00082">
    <property type="entry name" value="LRRCT"/>
    <property type="match status" value="1"/>
</dbReference>
<dbReference type="SMART" id="SM00255">
    <property type="entry name" value="TIR"/>
    <property type="match status" value="1"/>
</dbReference>
<dbReference type="SUPFAM" id="SSF52058">
    <property type="entry name" value="L domain-like"/>
    <property type="match status" value="1"/>
</dbReference>
<dbReference type="SUPFAM" id="SSF52047">
    <property type="entry name" value="RNI-like"/>
    <property type="match status" value="1"/>
</dbReference>
<dbReference type="SUPFAM" id="SSF52200">
    <property type="entry name" value="Toll/Interleukin receptor TIR domain"/>
    <property type="match status" value="1"/>
</dbReference>
<dbReference type="PROSITE" id="PS51450">
    <property type="entry name" value="LRR"/>
    <property type="match status" value="20"/>
</dbReference>
<dbReference type="PROSITE" id="PS50104">
    <property type="entry name" value="TIR"/>
    <property type="match status" value="1"/>
</dbReference>
<accession>Q9NR97</accession>
<accession>B3Y654</accession>
<accession>D1CS70</accession>
<accession>D1CS76</accession>
<accession>Q495P4</accession>
<accession>Q6UXL6</accession>
<accession>Q9NYG9</accession>
<sequence>MENMFLQSSMLTCIFLLISGSCELCAEENFSRSYPCDEKKQNDSVIAECSNRRLQEVPQTVGKYVTELDLSDNFITHITNESFQGLQNLTKINLNHNPNVQHQNGNPGIQSNGLNITDGAFLNLKNLRELLLEDNQLPQIPSGLPESLTELSLIQNNIYNITKEGISRLINLKNLYLAWNCYFNKVCEKTNIEDGVFETLTNLELLSLSFNSLSHVPPKLPSSLRKLFLSNTQIKYISEEDFKGLINLTLLDLSGNCPRCFNAPFPCVPCDGGASINIDRFAFQNLTQLRYLNLSSTSLRKINAAWFKNMPHLKVLDLEFNYLVGEIASGAFLTMLPRLEILDLSFNYIKGSYPQHINISRNFSKLLSLRALHLRGYVFQELREDDFQPLMQLPNLSTINLGINFIKQIDFKLFQNFSNLEIIYLSENRISPLVKDTRQSYANSSSFQRHIRKRRSTDFEFDPHSNFYHFTRPLIKPQCAAYGKALDLSLNSIFFIGPNQFENLPDIACLNLSANSNAQVLSGTEFSAIPHVKYLDLTNNRLDFDNASALTELSDLEVLDLSYNSHYFRIAGVTHHLEFIQNFTNLKVLNLSHNNIYTLTDKYNLESKSLVELVFSGNRLDILWNDDDNRYISIFKGLKNLTRLDLSLNRLKHIPNEAFLNLPASLTELHINDNMLKFFNWTLLQQFPRLELLDLRGNKLLFLTDSLSDFTSSLRTLLLSHNRISHLPSGFLSEVSSLKHLDLSSNLLKTINKSALETKTTTKLSMLELHGNPFECTCDIGDFRRWMDEHLNVKIPRLVDVICASPGDQRGKSIVSLELTTCVSDVTAVILFFFTFFITTMVMLAALAHHLFYWDVWFIYNVCLAKVKGYRSLSTSQTFYDAYISYDTKDASVTDWVINELRYHLEESRDKNVLLCLEERDWDPGLAIIDNLMQSINQSKKTVFVLTKKYAKSWNFKTAFYLALQRLMDENMDVIIFILLEPVLQHSQYLRLRQRICKSSILQWPDNPKAEGLFWQTLRNVVLTENDSRYNNMYVDSIKQY</sequence>
<proteinExistence type="evidence at protein level"/>
<comment type="function">
    <text evidence="5 6 8 9 10 11 12 14 15 17">Endosomal receptor that plays a key role in innate and adaptive immunity (PubMed:25297876, PubMed:32433612). Controls host immune response against pathogens through recognition of RNA degradation products specific to microorganisms that are initially processed by RNASET2 (PubMed:31778653). Recognizes GU-rich single-stranded RNA (GU-rich RNA) derived from SARS-CoV-2, SARS-CoV-1 and HIV-1 viruses (PubMed:33718825). Upon binding to agonists, undergoes dimerization that brings TIR domains from the two molecules into direct contact, leading to the recruitment of TIR-containing downstream adapter MYD88 through homotypic interaction (PubMed:23520111, PubMed:25599397, PubMed:26929371, PubMed:33718825). In turn, the Myddosome signaling complex is formed involving IRAK4, IRAK1, TRAF6, TRAF3 leading to activation of downstream transcription factors NF-kappa-B and IRF7 to induce pro-inflammatory cytokines and interferons, respectively (PubMed:16737960, PubMed:17932028, PubMed:29155428).</text>
</comment>
<comment type="activity regulation">
    <text evidence="10 11">Activated by RNAs having enough uridines.</text>
</comment>
<comment type="subunit">
    <text evidence="2 6 8 10 11 12 20">Homodimer (PubMed:23520111, PubMed:25599397, PubMed:26929371, PubMed:29155428). Interacts with MYD88 via their respective TIR domains (Probable). Interacts with UNC93B1 (By similarity). Interacts with BTK (PubMed:17932028). Interacts with SMPDL3B (By similarity).</text>
</comment>
<comment type="interaction">
    <interactant intactId="EBI-16356363">
        <id>Q9NR97</id>
    </interactant>
    <interactant intactId="EBI-4401271">
        <id>Q9H1C4</id>
        <label>UNC93B1</label>
    </interactant>
    <organismsDiffer>false</organismsDiffer>
    <experiments>4</experiments>
</comment>
<comment type="interaction">
    <interactant intactId="EBI-16041685">
        <id>Q9NR97-1</id>
    </interactant>
    <interactant intactId="EBI-16041685">
        <id>Q9NR97-1</id>
        <label>TLR8</label>
    </interactant>
    <organismsDiffer>false</organismsDiffer>
    <experiments>4</experiments>
</comment>
<comment type="subcellular location">
    <subcellularLocation>
        <location evidence="9">Endosome membrane</location>
        <topology evidence="1">Single-pass type I membrane protein</topology>
    </subcellularLocation>
    <text evidence="9">Endosomal localization confers distinctive proteolytic processing.</text>
</comment>
<comment type="alternative products">
    <event type="alternative splicing"/>
    <isoform>
        <id>Q9NR97-1</id>
        <name>1</name>
        <sequence type="displayed"/>
    </isoform>
    <isoform>
        <id>Q9NR97-2</id>
        <name>2</name>
        <sequence type="described" ref="VSP_053412"/>
    </isoform>
</comment>
<comment type="tissue specificity">
    <text evidence="17">Expressed in myeloid dendritic cells, monocytes, and monocyte-derived dendritic cells.</text>
</comment>
<comment type="PTM">
    <text evidence="13">Ubiquitinated by RNF216; leading to degradation by the proteasome.</text>
</comment>
<comment type="PTM">
    <text evidence="9 11">Proteolytic processing occurs in monocytes and monocyte-derived macrophages by both furin-like proprotein convertase and cathepsins (PubMed:25297876). The cleavage is necessary for dimer formation and subsequent activation (PubMed:26929371).</text>
</comment>
<comment type="disease" evidence="16 18">
    <disease id="DI-06381">
        <name>Immunodeficiency 98 with autoinflammation, X-linked</name>
        <acronym>IMD98</acronym>
        <description>An X-linked disorder characterized by onset of recurrent infections associated with lymphoproliferation and autoinflammation in the first decade of life. Mostly males are affected; carrier females may have mild symptoms. Features include mouth ulcers, fever, poor early growth, hepatosplenomegaly, lymphadenopathy, polyarthritis, and non-infectious enteritis.</description>
        <dbReference type="MIM" id="301078"/>
    </disease>
    <text>The disease is caused by variants affecting the gene represented in this entry.</text>
</comment>
<comment type="similarity">
    <text evidence="20">Belongs to the Toll-like receptor family.</text>
</comment>
<keyword id="KW-0002">3D-structure</keyword>
<keyword id="KW-0025">Alternative splicing</keyword>
<keyword id="KW-0225">Disease variant</keyword>
<keyword id="KW-1015">Disulfide bond</keyword>
<keyword id="KW-0967">Endosome</keyword>
<keyword id="KW-0325">Glycoprotein</keyword>
<keyword id="KW-0391">Immunity</keyword>
<keyword id="KW-0395">Inflammatory response</keyword>
<keyword id="KW-0399">Innate immunity</keyword>
<keyword id="KW-0433">Leucine-rich repeat</keyword>
<keyword id="KW-0472">Membrane</keyword>
<keyword id="KW-1267">Proteomics identification</keyword>
<keyword id="KW-0675">Receptor</keyword>
<keyword id="KW-1185">Reference proteome</keyword>
<keyword id="KW-0677">Repeat</keyword>
<keyword id="KW-0732">Signal</keyword>
<keyword id="KW-0812">Transmembrane</keyword>
<keyword id="KW-1133">Transmembrane helix</keyword>
<keyword id="KW-0832">Ubl conjugation</keyword>
<gene>
    <name evidence="21" type="primary">TLR8</name>
    <name type="ORF">UNQ249/PRO286</name>
</gene>
<reference key="1">
    <citation type="journal article" date="2000" name="Eur. Cytokine Netw.">
        <title>Three novel mammalian Toll-like receptors: gene structure, expression, and evolution.</title>
        <authorList>
            <person name="Du X."/>
            <person name="Poltorak A."/>
            <person name="Wei Y."/>
            <person name="Beutler B."/>
        </authorList>
    </citation>
    <scope>NUCLEOTIDE SEQUENCE [MRNA] (ISOFORM 2)</scope>
    <source>
        <tissue>Placenta</tissue>
    </source>
</reference>
<reference key="2">
    <citation type="journal article" date="2000" name="Eur. Cytokine Netw.">
        <title>Cloning and characterization of a sub-family of human Toll-like receptors: hTLR7, hTLR8 and hTLR9.</title>
        <authorList>
            <person name="Chuang T.-H."/>
            <person name="Ulevitch R.J."/>
        </authorList>
    </citation>
    <scope>NUCLEOTIDE SEQUENCE [MRNA] (ISOFORM 1)</scope>
    <source>
        <tissue>Placenta</tissue>
    </source>
</reference>
<reference key="3">
    <citation type="journal article" date="2008" name="Immunogenetics">
        <title>Natural selection in the TLR-related genes in the course of primate evolution.</title>
        <authorList>
            <person name="Nakajima T."/>
            <person name="Ohtani H."/>
            <person name="Satta Y."/>
            <person name="Uno Y."/>
            <person name="Akari H."/>
            <person name="Ishida T."/>
            <person name="Kimura A."/>
        </authorList>
    </citation>
    <scope>NUCLEOTIDE SEQUENCE [MRNA] (ISOFORM 1)</scope>
</reference>
<reference key="4">
    <citation type="journal article" date="2009" name="PLoS ONE">
        <title>The heterogeneous allelic repertoire of human Toll-Like receptor (TLR) genes.</title>
        <authorList>
            <person name="Georgel P."/>
            <person name="Macquin C."/>
            <person name="Bahram S."/>
        </authorList>
    </citation>
    <scope>NUCLEOTIDE SEQUENCE [GENOMIC DNA]</scope>
</reference>
<reference key="5">
    <citation type="journal article" date="2003" name="Genome Res.">
        <title>The secreted protein discovery initiative (SPDI), a large-scale effort to identify novel human secreted and transmembrane proteins: a bioinformatics assessment.</title>
        <authorList>
            <person name="Clark H.F."/>
            <person name="Gurney A.L."/>
            <person name="Abaya E."/>
            <person name="Baker K."/>
            <person name="Baldwin D.T."/>
            <person name="Brush J."/>
            <person name="Chen J."/>
            <person name="Chow B."/>
            <person name="Chui C."/>
            <person name="Crowley C."/>
            <person name="Currell B."/>
            <person name="Deuel B."/>
            <person name="Dowd P."/>
            <person name="Eaton D."/>
            <person name="Foster J.S."/>
            <person name="Grimaldi C."/>
            <person name="Gu Q."/>
            <person name="Hass P.E."/>
            <person name="Heldens S."/>
            <person name="Huang A."/>
            <person name="Kim H.S."/>
            <person name="Klimowski L."/>
            <person name="Jin Y."/>
            <person name="Johnson S."/>
            <person name="Lee J."/>
            <person name="Lewis L."/>
            <person name="Liao D."/>
            <person name="Mark M.R."/>
            <person name="Robbie E."/>
            <person name="Sanchez C."/>
            <person name="Schoenfeld J."/>
            <person name="Seshagiri S."/>
            <person name="Simmons L."/>
            <person name="Singh J."/>
            <person name="Smith V."/>
            <person name="Stinson J."/>
            <person name="Vagts A."/>
            <person name="Vandlen R.L."/>
            <person name="Watanabe C."/>
            <person name="Wieand D."/>
            <person name="Woods K."/>
            <person name="Xie M.-H."/>
            <person name="Yansura D.G."/>
            <person name="Yi S."/>
            <person name="Yu G."/>
            <person name="Yuan J."/>
            <person name="Zhang M."/>
            <person name="Zhang Z."/>
            <person name="Goddard A.D."/>
            <person name="Wood W.I."/>
            <person name="Godowski P.J."/>
            <person name="Gray A.M."/>
        </authorList>
    </citation>
    <scope>NUCLEOTIDE SEQUENCE [LARGE SCALE MRNA] (ISOFORM 1)</scope>
</reference>
<reference key="6">
    <citation type="journal article" date="2005" name="Nature">
        <title>The DNA sequence of the human X chromosome.</title>
        <authorList>
            <person name="Ross M.T."/>
            <person name="Grafham D.V."/>
            <person name="Coffey A.J."/>
            <person name="Scherer S."/>
            <person name="McLay K."/>
            <person name="Muzny D."/>
            <person name="Platzer M."/>
            <person name="Howell G.R."/>
            <person name="Burrows C."/>
            <person name="Bird C.P."/>
            <person name="Frankish A."/>
            <person name="Lovell F.L."/>
            <person name="Howe K.L."/>
            <person name="Ashurst J.L."/>
            <person name="Fulton R.S."/>
            <person name="Sudbrak R."/>
            <person name="Wen G."/>
            <person name="Jones M.C."/>
            <person name="Hurles M.E."/>
            <person name="Andrews T.D."/>
            <person name="Scott C.E."/>
            <person name="Searle S."/>
            <person name="Ramser J."/>
            <person name="Whittaker A."/>
            <person name="Deadman R."/>
            <person name="Carter N.P."/>
            <person name="Hunt S.E."/>
            <person name="Chen R."/>
            <person name="Cree A."/>
            <person name="Gunaratne P."/>
            <person name="Havlak P."/>
            <person name="Hodgson A."/>
            <person name="Metzker M.L."/>
            <person name="Richards S."/>
            <person name="Scott G."/>
            <person name="Steffen D."/>
            <person name="Sodergren E."/>
            <person name="Wheeler D.A."/>
            <person name="Worley K.C."/>
            <person name="Ainscough R."/>
            <person name="Ambrose K.D."/>
            <person name="Ansari-Lari M.A."/>
            <person name="Aradhya S."/>
            <person name="Ashwell R.I."/>
            <person name="Babbage A.K."/>
            <person name="Bagguley C.L."/>
            <person name="Ballabio A."/>
            <person name="Banerjee R."/>
            <person name="Barker G.E."/>
            <person name="Barlow K.F."/>
            <person name="Barrett I.P."/>
            <person name="Bates K.N."/>
            <person name="Beare D.M."/>
            <person name="Beasley H."/>
            <person name="Beasley O."/>
            <person name="Beck A."/>
            <person name="Bethel G."/>
            <person name="Blechschmidt K."/>
            <person name="Brady N."/>
            <person name="Bray-Allen S."/>
            <person name="Bridgeman A.M."/>
            <person name="Brown A.J."/>
            <person name="Brown M.J."/>
            <person name="Bonnin D."/>
            <person name="Bruford E.A."/>
            <person name="Buhay C."/>
            <person name="Burch P."/>
            <person name="Burford D."/>
            <person name="Burgess J."/>
            <person name="Burrill W."/>
            <person name="Burton J."/>
            <person name="Bye J.M."/>
            <person name="Carder C."/>
            <person name="Carrel L."/>
            <person name="Chako J."/>
            <person name="Chapman J.C."/>
            <person name="Chavez D."/>
            <person name="Chen E."/>
            <person name="Chen G."/>
            <person name="Chen Y."/>
            <person name="Chen Z."/>
            <person name="Chinault C."/>
            <person name="Ciccodicola A."/>
            <person name="Clark S.Y."/>
            <person name="Clarke G."/>
            <person name="Clee C.M."/>
            <person name="Clegg S."/>
            <person name="Clerc-Blankenburg K."/>
            <person name="Clifford K."/>
            <person name="Cobley V."/>
            <person name="Cole C.G."/>
            <person name="Conquer J.S."/>
            <person name="Corby N."/>
            <person name="Connor R.E."/>
            <person name="David R."/>
            <person name="Davies J."/>
            <person name="Davis C."/>
            <person name="Davis J."/>
            <person name="Delgado O."/>
            <person name="Deshazo D."/>
            <person name="Dhami P."/>
            <person name="Ding Y."/>
            <person name="Dinh H."/>
            <person name="Dodsworth S."/>
            <person name="Draper H."/>
            <person name="Dugan-Rocha S."/>
            <person name="Dunham A."/>
            <person name="Dunn M."/>
            <person name="Durbin K.J."/>
            <person name="Dutta I."/>
            <person name="Eades T."/>
            <person name="Ellwood M."/>
            <person name="Emery-Cohen A."/>
            <person name="Errington H."/>
            <person name="Evans K.L."/>
            <person name="Faulkner L."/>
            <person name="Francis F."/>
            <person name="Frankland J."/>
            <person name="Fraser A.E."/>
            <person name="Galgoczy P."/>
            <person name="Gilbert J."/>
            <person name="Gill R."/>
            <person name="Gloeckner G."/>
            <person name="Gregory S.G."/>
            <person name="Gribble S."/>
            <person name="Griffiths C."/>
            <person name="Grocock R."/>
            <person name="Gu Y."/>
            <person name="Gwilliam R."/>
            <person name="Hamilton C."/>
            <person name="Hart E.A."/>
            <person name="Hawes A."/>
            <person name="Heath P.D."/>
            <person name="Heitmann K."/>
            <person name="Hennig S."/>
            <person name="Hernandez J."/>
            <person name="Hinzmann B."/>
            <person name="Ho S."/>
            <person name="Hoffs M."/>
            <person name="Howden P.J."/>
            <person name="Huckle E.J."/>
            <person name="Hume J."/>
            <person name="Hunt P.J."/>
            <person name="Hunt A.R."/>
            <person name="Isherwood J."/>
            <person name="Jacob L."/>
            <person name="Johnson D."/>
            <person name="Jones S."/>
            <person name="de Jong P.J."/>
            <person name="Joseph S.S."/>
            <person name="Keenan S."/>
            <person name="Kelly S."/>
            <person name="Kershaw J.K."/>
            <person name="Khan Z."/>
            <person name="Kioschis P."/>
            <person name="Klages S."/>
            <person name="Knights A.J."/>
            <person name="Kosiura A."/>
            <person name="Kovar-Smith C."/>
            <person name="Laird G.K."/>
            <person name="Langford C."/>
            <person name="Lawlor S."/>
            <person name="Leversha M."/>
            <person name="Lewis L."/>
            <person name="Liu W."/>
            <person name="Lloyd C."/>
            <person name="Lloyd D.M."/>
            <person name="Loulseged H."/>
            <person name="Loveland J.E."/>
            <person name="Lovell J.D."/>
            <person name="Lozado R."/>
            <person name="Lu J."/>
            <person name="Lyne R."/>
            <person name="Ma J."/>
            <person name="Maheshwari M."/>
            <person name="Matthews L.H."/>
            <person name="McDowall J."/>
            <person name="McLaren S."/>
            <person name="McMurray A."/>
            <person name="Meidl P."/>
            <person name="Meitinger T."/>
            <person name="Milne S."/>
            <person name="Miner G."/>
            <person name="Mistry S.L."/>
            <person name="Morgan M."/>
            <person name="Morris S."/>
            <person name="Mueller I."/>
            <person name="Mullikin J.C."/>
            <person name="Nguyen N."/>
            <person name="Nordsiek G."/>
            <person name="Nyakatura G."/>
            <person name="O'dell C.N."/>
            <person name="Okwuonu G."/>
            <person name="Palmer S."/>
            <person name="Pandian R."/>
            <person name="Parker D."/>
            <person name="Parrish J."/>
            <person name="Pasternak S."/>
            <person name="Patel D."/>
            <person name="Pearce A.V."/>
            <person name="Pearson D.M."/>
            <person name="Pelan S.E."/>
            <person name="Perez L."/>
            <person name="Porter K.M."/>
            <person name="Ramsey Y."/>
            <person name="Reichwald K."/>
            <person name="Rhodes S."/>
            <person name="Ridler K.A."/>
            <person name="Schlessinger D."/>
            <person name="Schueler M.G."/>
            <person name="Sehra H.K."/>
            <person name="Shaw-Smith C."/>
            <person name="Shen H."/>
            <person name="Sheridan E.M."/>
            <person name="Shownkeen R."/>
            <person name="Skuce C.D."/>
            <person name="Smith M.L."/>
            <person name="Sotheran E.C."/>
            <person name="Steingruber H.E."/>
            <person name="Steward C.A."/>
            <person name="Storey R."/>
            <person name="Swann R.M."/>
            <person name="Swarbreck D."/>
            <person name="Tabor P.E."/>
            <person name="Taudien S."/>
            <person name="Taylor T."/>
            <person name="Teague B."/>
            <person name="Thomas K."/>
            <person name="Thorpe A."/>
            <person name="Timms K."/>
            <person name="Tracey A."/>
            <person name="Trevanion S."/>
            <person name="Tromans A.C."/>
            <person name="d'Urso M."/>
            <person name="Verduzco D."/>
            <person name="Villasana D."/>
            <person name="Waldron L."/>
            <person name="Wall M."/>
            <person name="Wang Q."/>
            <person name="Warren J."/>
            <person name="Warry G.L."/>
            <person name="Wei X."/>
            <person name="West A."/>
            <person name="Whitehead S.L."/>
            <person name="Whiteley M.N."/>
            <person name="Wilkinson J.E."/>
            <person name="Willey D.L."/>
            <person name="Williams G."/>
            <person name="Williams L."/>
            <person name="Williamson A."/>
            <person name="Williamson H."/>
            <person name="Wilming L."/>
            <person name="Woodmansey R.L."/>
            <person name="Wray P.W."/>
            <person name="Yen J."/>
            <person name="Zhang J."/>
            <person name="Zhou J."/>
            <person name="Zoghbi H."/>
            <person name="Zorilla S."/>
            <person name="Buck D."/>
            <person name="Reinhardt R."/>
            <person name="Poustka A."/>
            <person name="Rosenthal A."/>
            <person name="Lehrach H."/>
            <person name="Meindl A."/>
            <person name="Minx P.J."/>
            <person name="Hillier L.W."/>
            <person name="Willard H.F."/>
            <person name="Wilson R.K."/>
            <person name="Waterston R.H."/>
            <person name="Rice C.M."/>
            <person name="Vaudin M."/>
            <person name="Coulson A."/>
            <person name="Nelson D.L."/>
            <person name="Weinstock G."/>
            <person name="Sulston J.E."/>
            <person name="Durbin R.M."/>
            <person name="Hubbard T."/>
            <person name="Gibbs R.A."/>
            <person name="Beck S."/>
            <person name="Rogers J."/>
            <person name="Bentley D.R."/>
        </authorList>
    </citation>
    <scope>NUCLEOTIDE SEQUENCE [LARGE SCALE GENOMIC DNA]</scope>
</reference>
<reference key="7">
    <citation type="submission" date="2005-07" db="EMBL/GenBank/DDBJ databases">
        <authorList>
            <person name="Mural R.J."/>
            <person name="Istrail S."/>
            <person name="Sutton G.G."/>
            <person name="Florea L."/>
            <person name="Halpern A.L."/>
            <person name="Mobarry C.M."/>
            <person name="Lippert R."/>
            <person name="Walenz B."/>
            <person name="Shatkay H."/>
            <person name="Dew I."/>
            <person name="Miller J.R."/>
            <person name="Flanigan M.J."/>
            <person name="Edwards N.J."/>
            <person name="Bolanos R."/>
            <person name="Fasulo D."/>
            <person name="Halldorsson B.V."/>
            <person name="Hannenhalli S."/>
            <person name="Turner R."/>
            <person name="Yooseph S."/>
            <person name="Lu F."/>
            <person name="Nusskern D.R."/>
            <person name="Shue B.C."/>
            <person name="Zheng X.H."/>
            <person name="Zhong F."/>
            <person name="Delcher A.L."/>
            <person name="Huson D.H."/>
            <person name="Kravitz S.A."/>
            <person name="Mouchard L."/>
            <person name="Reinert K."/>
            <person name="Remington K.A."/>
            <person name="Clark A.G."/>
            <person name="Waterman M.S."/>
            <person name="Eichler E.E."/>
            <person name="Adams M.D."/>
            <person name="Hunkapiller M.W."/>
            <person name="Myers E.W."/>
            <person name="Venter J.C."/>
        </authorList>
    </citation>
    <scope>NUCLEOTIDE SEQUENCE [LARGE SCALE GENOMIC DNA]</scope>
</reference>
<reference key="8">
    <citation type="journal article" date="2004" name="Genome Res.">
        <title>The status, quality, and expansion of the NIH full-length cDNA project: the Mammalian Gene Collection (MGC).</title>
        <authorList>
            <consortium name="The MGC Project Team"/>
        </authorList>
    </citation>
    <scope>NUCLEOTIDE SEQUENCE [LARGE SCALE MRNA] (ISOFORM 1)</scope>
</reference>
<reference key="9">
    <citation type="journal article" date="2006" name="J. Biol. Chem.">
        <title>TLR8-mediated NF-kappaB and JNK activation are TAK1-independent and MEKK3-dependent.</title>
        <authorList>
            <person name="Qin J."/>
            <person name="Yao J."/>
            <person name="Cui G."/>
            <person name="Xiao H."/>
            <person name="Kim T.W."/>
            <person name="Fraczek J."/>
            <person name="Wightman P."/>
            <person name="Sato S."/>
            <person name="Akira S."/>
            <person name="Puel A."/>
            <person name="Casanova J.L."/>
            <person name="Su B."/>
            <person name="Li X."/>
        </authorList>
    </citation>
    <scope>FUNCTION IN NF-KAPPA-B ACTIVATION</scope>
</reference>
<reference key="10">
    <citation type="journal article" date="2007" name="J. Biol. Chem.">
        <title>Signaling by Toll-like receptors 8 and 9 requires Bruton's tyrosine kinase.</title>
        <authorList>
            <person name="Doyle S.L."/>
            <person name="Jefferies C.A."/>
            <person name="Feighery C."/>
            <person name="O'Neill L.A."/>
        </authorList>
    </citation>
    <scope>FUNCTION</scope>
    <scope>INTERACTION WITH BTK</scope>
</reference>
<reference key="11">
    <citation type="journal article" date="2009" name="J. Proteome Res.">
        <title>Glycoproteomics analysis of human liver tissue by combination of multiple enzyme digestion and hydrazide chemistry.</title>
        <authorList>
            <person name="Chen R."/>
            <person name="Jiang X."/>
            <person name="Sun D."/>
            <person name="Han G."/>
            <person name="Wang F."/>
            <person name="Ye M."/>
            <person name="Wang L."/>
            <person name="Zou H."/>
        </authorList>
    </citation>
    <scope>GLYCOSYLATION [LARGE SCALE ANALYSIS] AT ASN-80 AND ASN-88</scope>
    <source>
        <tissue>Liver</tissue>
    </source>
</reference>
<reference key="12">
    <citation type="journal article" date="2014" name="J. Immunol.">
        <title>Endosomal localization of TLR8 confers distinctive proteolytic processing on human myeloid cells.</title>
        <authorList>
            <person name="Ishii N."/>
            <person name="Funami K."/>
            <person name="Tatematsu M."/>
            <person name="Seya T."/>
            <person name="Matsumoto M."/>
        </authorList>
    </citation>
    <scope>FUNCTION</scope>
    <scope>SUBCELLULAR LOCATION</scope>
    <scope>CLEAVAGE</scope>
</reference>
<reference key="13">
    <citation type="journal article" date="2020" name="Am. J. Respir. Cell Mol. Biol.">
        <title>Toll-Like Receptor 8 Stability is Regulated by Ring Finger 216 in response to circulating MicroRNAs.</title>
        <authorList>
            <person name="Evankovich J."/>
            <person name="Lear T."/>
            <person name="Baldwin C."/>
            <person name="Chen Y."/>
            <person name="White V."/>
            <person name="Villandre J."/>
            <person name="Londino J."/>
            <person name="Liu Y."/>
            <person name="McVerry B."/>
            <person name="Kitsios G.D."/>
            <person name="Mallampalli R.K."/>
            <person name="Chen B.B."/>
        </authorList>
    </citation>
    <scope>UBIQUITINATION BY RNF216</scope>
</reference>
<reference key="14">
    <citation type="journal article" date="2019" name="Cell">
        <title>TLR8 Is a Sensor of RNase T2 Degradation Products.</title>
        <authorList>
            <person name="Greulich W."/>
            <person name="Wagner M."/>
            <person name="Gaidt M.M."/>
            <person name="Stafford C."/>
            <person name="Cheng Y."/>
            <person name="Linder A."/>
            <person name="Carell T."/>
            <person name="Hornung V."/>
        </authorList>
    </citation>
    <scope>FUNCTION</scope>
</reference>
<reference key="15">
    <citation type="journal article" date="2020" name="Nature">
        <title>TASL is the SLC15A4-associated adaptor for IRF5 activation by TLR7-9.</title>
        <authorList>
            <person name="Heinz L.X."/>
            <person name="Lee J."/>
            <person name="Kapoor U."/>
            <person name="Kartnig F."/>
            <person name="Sedlyarov V."/>
            <person name="Papakostas K."/>
            <person name="Cesar-Razquin A."/>
            <person name="Essletzbichler P."/>
            <person name="Goldmann U."/>
            <person name="Stefanovic A."/>
            <person name="Bigenzahn J.W."/>
            <person name="Scorzoni S."/>
            <person name="Pizzagalli M.D."/>
            <person name="Bensimon A."/>
            <person name="Mueller A.C."/>
            <person name="King F.J."/>
            <person name="Li J."/>
            <person name="Girardi E."/>
            <person name="Mbow M.L."/>
            <person name="Whitehurst C.E."/>
            <person name="Rebsamen M."/>
            <person name="Superti-Furga G."/>
        </authorList>
    </citation>
    <scope>FUNCTION</scope>
</reference>
<reference key="16">
    <citation type="journal article" date="2021" name="IScience">
        <title>SARS-CoV-2, SARS-CoV-1, and HIV-1 derived ssRNA sequences activate the NLRP3 inflammasome in human macrophages through a non-classical pathway.</title>
        <authorList>
            <person name="Campbell G.R."/>
            <person name="To R.K."/>
            <person name="Hanna J."/>
            <person name="Spector S.A."/>
        </authorList>
    </citation>
    <scope>FUNCTION</scope>
    <scope>TISSUE SPECIFICITY</scope>
</reference>
<reference key="17">
    <citation type="journal article" date="2013" name="Science">
        <title>Structural reorganization of the Toll-like receptor 8 dimer induced by agonistic ligands.</title>
        <authorList>
            <person name="Tanji H."/>
            <person name="Ohto U."/>
            <person name="Shibata T."/>
            <person name="Miyake K."/>
            <person name="Shimizu T."/>
        </authorList>
    </citation>
    <scope>X-RAY CRYSTALLOGRAPHY (2.0 ANGSTROMS) OF 27-827 IN COMPLEXES WITH RESIQUIMOD AND OTHER SYNTHETIC AGONISTS</scope>
    <scope>FUNCTION</scope>
    <scope>SUBUNIT</scope>
    <scope>LEUCINE-RICH REPEATS</scope>
    <scope>MUTAGENESIS OF TYR-348; VAL-378; PHE-405; VAL-520; ASP-543 AND THR-574</scope>
    <scope>GLYCOSYLATION AT ASN-293; ASN-395; ASN-511; ASN-546; ASN-590; ASN-640 AND ASN-680</scope>
    <scope>DISULFIDE BONDS</scope>
</reference>
<reference key="18">
    <citation type="journal article" date="2015" name="Nat. Struct. Mol. Biol.">
        <title>Toll-like receptor 8 senses degradation products of single-stranded RNA.</title>
        <authorList>
            <person name="Tanji H."/>
            <person name="Ohto U."/>
            <person name="Shibata T."/>
            <person name="Taoka M."/>
            <person name="Yamauchi Y."/>
            <person name="Isobe T."/>
            <person name="Miyake K."/>
            <person name="Shimizu T."/>
        </authorList>
    </citation>
    <scope>X-RAY CRYSTALLOGRAPHY (1.90 ANGSTROMS) OF 27-827 IN COMPLEX WITH URIDINE</scope>
    <scope>FUNCTION</scope>
    <scope>SUBUNIT</scope>
    <scope>ACTIVITY REGULATION</scope>
    <scope>MUTAGENESIS OF TYR-348; PHE-405; ASP-543 AND THR-574</scope>
</reference>
<reference key="19">
    <citation type="journal article" date="2016" name="Proc. Natl. Acad. Sci. U.S.A.">
        <title>Autoinhibition and relief mechanism by the proteolytic processing of Toll-like receptor 8.</title>
        <authorList>
            <person name="Tanji H."/>
            <person name="Ohto U."/>
            <person name="Motoi Y."/>
            <person name="Shibata T."/>
            <person name="Miyake K."/>
            <person name="Shimizu T."/>
        </authorList>
    </citation>
    <scope>X-RAY CRYSTALLOGRAPHY (2.60 ANGSTROMS) OF 27-827</scope>
    <scope>SUBUNIT</scope>
    <scope>MUTAGENESIS OF 452-ARG--ARG-455</scope>
    <scope>CLEAVAGE</scope>
    <scope>ACTIVITY REGULATION</scope>
</reference>
<reference key="20">
    <citation type="journal article" date="2018" name="Nat. Chem. Biol.">
        <title>Small-molecule inhibition of TLR8 through stabilization of its resting state.</title>
        <authorList>
            <person name="Zhang S."/>
            <person name="Hu Z."/>
            <person name="Tanji H."/>
            <person name="Jiang S."/>
            <person name="Das N."/>
            <person name="Li J."/>
            <person name="Sakaniwa K."/>
            <person name="Jin J."/>
            <person name="Bian Y."/>
            <person name="Ohto U."/>
            <person name="Shimizu T."/>
            <person name="Yin H."/>
        </authorList>
    </citation>
    <scope>X-RAY CRYSTALLOGRAPHY (2.30 ANGSTROMS) OF 27-827</scope>
    <scope>SUBUNIT</scope>
    <scope>FUNCTION</scope>
</reference>
<reference key="21">
    <citation type="journal article" date="2021" name="Blood">
        <title>Immunodeficiency and bone marrow failure with mosaic and germline TLR8 gain of function.</title>
        <authorList>
            <person name="Aluri J."/>
            <person name="Bach A."/>
            <person name="Kaviany S."/>
            <person name="Chiquetto Paracatu L."/>
            <person name="Kitcharoensakkul M."/>
            <person name="Walkiewicz M.A."/>
            <person name="Putnam C.D."/>
            <person name="Shinawi M."/>
            <person name="Saucier N."/>
            <person name="Rizzi E.M."/>
            <person name="Harmon M.T."/>
            <person name="Keppel M.P."/>
            <person name="Ritter M."/>
            <person name="Similuk M."/>
            <person name="Kulm E."/>
            <person name="Joyce M."/>
            <person name="de Jesus A.A."/>
            <person name="Goldbach-Mansky R."/>
            <person name="Lee Y.S."/>
            <person name="Cella M."/>
            <person name="Kendall P.L."/>
            <person name="Dinauer M.C."/>
            <person name="Bednarski J.J."/>
            <person name="Bemrich-Stolz C."/>
            <person name="Canna S.W."/>
            <person name="Abraham S.M."/>
            <person name="Demczko M.M."/>
            <person name="Powell J."/>
            <person name="Jones S.M."/>
            <person name="Scurlock A.M."/>
            <person name="De Ravin S.S."/>
            <person name="Bleesing J.J."/>
            <person name="Connelly J.A."/>
            <person name="Rao V.K."/>
            <person name="Schuettpelz L.G."/>
            <person name="Cooper M.A."/>
        </authorList>
    </citation>
    <scope>VARIANTS IMD98 LEU-432; LEU-494 AND ASP-572</scope>
    <scope>CHARACTERIZATION OF VARIANTS IMD98 LEU-432; LEU-494 AND ASP-572</scope>
    <scope>INVOLVEMENT IN IMD98</scope>
    <scope>MUTAGENESIS OF ASP-543</scope>
</reference>
<reference key="22">
    <citation type="journal article" date="2022" name="Am. J. Hematol.">
        <title>TLR8/TLR7 dysregulation due to a novel TLR8 mutation causes severe autoimmune hemolytic anemia and autoinflammation in identical twins.</title>
        <authorList>
            <person name="Fejtkova M."/>
            <person name="Sukova M."/>
            <person name="Hlozkova K."/>
            <person name="Skvarova Kramarzova K."/>
            <person name="Rackova M."/>
            <person name="Jakubec D."/>
            <person name="Bakardjieva M."/>
            <person name="Bloomfield M."/>
            <person name="Klocperk A."/>
            <person name="Parackova Z."/>
            <person name="Sediva A."/>
            <person name="Aluri J."/>
            <person name="Novakova M."/>
            <person name="Kalina T."/>
            <person name="Fronkova E."/>
            <person name="Hrusak O."/>
            <person name="Malcova H."/>
            <person name="Sedlacek P."/>
            <person name="Liba Z."/>
            <person name="Kudr M."/>
            <person name="Stary J."/>
            <person name="Cooper M.A."/>
            <person name="Svaton M."/>
            <person name="Kanderova V."/>
        </authorList>
    </citation>
    <scope>VARIANT IMD98 VAL-572</scope>
    <scope>CHARACTERIZATION OF VARIANT IMD98 VAL-572</scope>
</reference>
<name>TLR8_HUMAN</name>
<protein>
    <recommendedName>
        <fullName evidence="20">Toll-like receptor 8</fullName>
    </recommendedName>
    <cdAntigenName>CD288</cdAntigenName>
</protein>
<feature type="signal peptide" evidence="3">
    <location>
        <begin position="1"/>
        <end position="26"/>
    </location>
</feature>
<feature type="chain" id="PRO_0000034735" description="Toll-like receptor 8">
    <location>
        <begin position="27"/>
        <end position="1041"/>
    </location>
</feature>
<feature type="topological domain" description="Extracellular" evidence="3">
    <location>
        <begin position="27"/>
        <end position="827"/>
    </location>
</feature>
<feature type="transmembrane region" description="Helical" evidence="3">
    <location>
        <begin position="828"/>
        <end position="848"/>
    </location>
</feature>
<feature type="topological domain" description="Cytoplasmic" evidence="3">
    <location>
        <begin position="849"/>
        <end position="1041"/>
    </location>
</feature>
<feature type="repeat" description="LRR 1" evidence="8">
    <location>
        <begin position="126"/>
        <end position="147"/>
    </location>
</feature>
<feature type="repeat" description="LRR 2" evidence="8">
    <location>
        <begin position="148"/>
        <end position="168"/>
    </location>
</feature>
<feature type="repeat" description="LRR 3" evidence="8">
    <location>
        <begin position="171"/>
        <end position="193"/>
    </location>
</feature>
<feature type="repeat" description="LRR 4" evidence="8">
    <location>
        <begin position="202"/>
        <end position="223"/>
    </location>
</feature>
<feature type="repeat" description="LRR 5" evidence="8">
    <location>
        <begin position="224"/>
        <end position="244"/>
    </location>
</feature>
<feature type="repeat" description="LRR 6" evidence="8">
    <location>
        <begin position="247"/>
        <end position="268"/>
    </location>
</feature>
<feature type="repeat" description="LRR 7" evidence="8">
    <location>
        <begin position="288"/>
        <end position="309"/>
    </location>
</feature>
<feature type="repeat" description="LRR 8" evidence="8">
    <location>
        <begin position="312"/>
        <end position="334"/>
    </location>
</feature>
<feature type="repeat" description="LRR 9" evidence="8">
    <location>
        <begin position="338"/>
        <end position="360"/>
    </location>
</feature>
<feature type="repeat" description="LRR 10" evidence="8">
    <location>
        <begin position="368"/>
        <end position="389"/>
    </location>
</feature>
<feature type="repeat" description="LRR 11" evidence="8">
    <location>
        <begin position="395"/>
        <end position="416"/>
    </location>
</feature>
<feature type="repeat" description="LRR 12" evidence="8">
    <location>
        <begin position="419"/>
        <end position="440"/>
    </location>
</feature>
<feature type="repeat" description="LRR 13" evidence="8">
    <location>
        <begin position="482"/>
        <end position="503"/>
    </location>
</feature>
<feature type="repeat" description="LRR 14" evidence="8">
    <location>
        <begin position="506"/>
        <end position="527"/>
    </location>
</feature>
<feature type="repeat" description="LRR 15" evidence="8">
    <location>
        <begin position="531"/>
        <end position="551"/>
    </location>
</feature>
<feature type="repeat" description="LRR 16" evidence="8">
    <location>
        <begin position="555"/>
        <end position="577"/>
    </location>
</feature>
<feature type="repeat" description="LRR 17" evidence="8">
    <location>
        <begin position="585"/>
        <end position="606"/>
    </location>
</feature>
<feature type="repeat" description="LRR 18" evidence="8">
    <location>
        <begin position="609"/>
        <end position="630"/>
    </location>
</feature>
<feature type="repeat" description="LRR 19" evidence="8">
    <location>
        <begin position="640"/>
        <end position="661"/>
    </location>
</feature>
<feature type="repeat" description="LRR 20" evidence="8">
    <location>
        <begin position="665"/>
        <end position="685"/>
    </location>
</feature>
<feature type="repeat" description="LRR 21" evidence="8">
    <location>
        <begin position="689"/>
        <end position="710"/>
    </location>
</feature>
<feature type="repeat" description="LRR 22" evidence="8">
    <location>
        <begin position="713"/>
        <end position="734"/>
    </location>
</feature>
<feature type="repeat" description="LRR 23" evidence="8">
    <location>
        <begin position="737"/>
        <end position="758"/>
    </location>
</feature>
<feature type="domain" description="LRRCT">
    <location>
        <begin position="772"/>
        <end position="824"/>
    </location>
</feature>
<feature type="domain" description="TIR" evidence="4">
    <location>
        <begin position="878"/>
        <end position="1022"/>
    </location>
</feature>
<feature type="glycosylation site" description="N-linked (GlcNAc...) asparagine" evidence="3">
    <location>
        <position position="29"/>
    </location>
</feature>
<feature type="glycosylation site" description="N-linked (GlcNAc...) asparagine" evidence="3">
    <location>
        <position position="42"/>
    </location>
</feature>
<feature type="glycosylation site" description="N-linked (GlcNAc...) asparagine" evidence="7">
    <location>
        <position position="80"/>
    </location>
</feature>
<feature type="glycosylation site" description="N-linked (GlcNAc...) asparagine" evidence="7">
    <location>
        <position position="88"/>
    </location>
</feature>
<feature type="glycosylation site" description="N-linked (GlcNAc...) asparagine" evidence="3">
    <location>
        <position position="115"/>
    </location>
</feature>
<feature type="glycosylation site" description="N-linked (GlcNAc...) asparagine" evidence="3">
    <location>
        <position position="160"/>
    </location>
</feature>
<feature type="glycosylation site" description="N-linked (GlcNAc...) asparagine" evidence="3">
    <location>
        <position position="247"/>
    </location>
</feature>
<feature type="glycosylation site" description="N-linked (GlcNAc...) asparagine" evidence="3">
    <location>
        <position position="285"/>
    </location>
</feature>
<feature type="glycosylation site" description="N-linked (GlcNAc...) asparagine" evidence="8">
    <location>
        <position position="293"/>
    </location>
</feature>
<feature type="glycosylation site" description="N-linked (GlcNAc...) asparagine" evidence="3">
    <location>
        <position position="358"/>
    </location>
</feature>
<feature type="glycosylation site" description="N-linked (GlcNAc...) asparagine" evidence="3">
    <location>
        <position position="362"/>
    </location>
</feature>
<feature type="glycosylation site" description="N-linked (GlcNAc...) asparagine" evidence="8">
    <location>
        <position position="395"/>
    </location>
</feature>
<feature type="glycosylation site" description="N-linked (GlcNAc...) asparagine" evidence="3">
    <location>
        <position position="416"/>
    </location>
</feature>
<feature type="glycosylation site" description="N-linked (GlcNAc...) asparagine" evidence="3">
    <location>
        <position position="443"/>
    </location>
</feature>
<feature type="glycosylation site" description="N-linked (GlcNAc...) asparagine" evidence="8">
    <location>
        <position position="511"/>
    </location>
</feature>
<feature type="glycosylation site" description="N-linked (GlcNAc...) asparagine" evidence="8">
    <location>
        <position position="546"/>
    </location>
</feature>
<feature type="glycosylation site" description="N-linked (GlcNAc...) asparagine" evidence="3">
    <location>
        <position position="582"/>
    </location>
</feature>
<feature type="glycosylation site" description="N-linked (GlcNAc...) asparagine" evidence="8">
    <location>
        <position position="590"/>
    </location>
</feature>
<feature type="glycosylation site" description="N-linked (GlcNAc...) asparagine" evidence="8">
    <location>
        <position position="640"/>
    </location>
</feature>
<feature type="glycosylation site" description="N-linked (GlcNAc...) asparagine" evidence="8">
    <location>
        <position position="680"/>
    </location>
</feature>
<feature type="glycosylation site" description="N-linked (GlcNAc...) asparagine" evidence="3">
    <location>
        <position position="752"/>
    </location>
</feature>
<feature type="disulfide bond" evidence="8">
    <location>
        <begin position="36"/>
        <end position="49"/>
    </location>
</feature>
<feature type="disulfide bond" evidence="8">
    <location>
        <begin position="181"/>
        <end position="187"/>
    </location>
</feature>
<feature type="disulfide bond" evidence="8">
    <location>
        <begin position="257"/>
        <end position="270"/>
    </location>
</feature>
<feature type="disulfide bond" evidence="8">
    <location>
        <begin position="260"/>
        <end position="267"/>
    </location>
</feature>
<feature type="disulfide bond" evidence="8">
    <location>
        <begin position="479"/>
        <end position="509"/>
    </location>
</feature>
<feature type="disulfide bond" evidence="8">
    <location>
        <begin position="776"/>
        <end position="803"/>
    </location>
</feature>
<feature type="splice variant" id="VSP_053412" description="In isoform 2." evidence="19">
    <original>M</original>
    <variation>MKESSLQNSSCSLGKETKK</variation>
    <location>
        <position position="1"/>
    </location>
</feature>
<feature type="sequence variant" id="VAR_024667" description="In dbSNP:rs5744077.">
    <original>M</original>
    <variation>V</variation>
    <location>
        <position position="10"/>
    </location>
</feature>
<feature type="sequence variant" id="VAR_087088" description="In IMD98; gain-of-function variant resulting in increased NF-kappa-B activation measured in a reporter assay; dbSNP:rs2147258995." evidence="16">
    <original>P</original>
    <variation>L</variation>
    <location>
        <position position="432"/>
    </location>
</feature>
<feature type="sequence variant" id="VAR_087089" description="In IMD98; gain-of-function variant resulting in increased NF-kappa-B activation measured in a reporter assay; dbSNP:rs2147259120." evidence="16">
    <original>F</original>
    <variation>L</variation>
    <location>
        <position position="494"/>
    </location>
</feature>
<feature type="sequence variant" id="VAR_087090" description="In IMD98; gain-of-function variant resulting in increased NF-kappa-B activation measured in a reporter assay; dbSNP:rs1385657144." evidence="16">
    <original>G</original>
    <variation>D</variation>
    <location>
        <position position="572"/>
    </location>
</feature>
<feature type="sequence variant" id="VAR_087091" description="In IMD98; increased NF-kappa-B activation measured in a reporter assay; results in increased TLR8 protein degradation; dbSNP:rs1385657144." evidence="18">
    <original>G</original>
    <variation>V</variation>
    <location>
        <position position="572"/>
    </location>
</feature>
<feature type="sequence variant" id="VAR_052363" description="In dbSNP:rs5744082.">
    <original>R</original>
    <variation>Q</variation>
    <location>
        <position position="715"/>
    </location>
</feature>
<feature type="mutagenesis site" description="Abolishes activation of NF-kappa-B." evidence="8">
    <original>Y</original>
    <variation>A</variation>
    <location>
        <position position="348"/>
    </location>
</feature>
<feature type="mutagenesis site" description="Abolishes responses to both ssRNA and chemical ligands." evidence="10">
    <original>Y</original>
    <variation>A</variation>
    <location>
        <position position="348"/>
    </location>
</feature>
<feature type="mutagenesis site" description="Increases activation of NF-kappa-B." evidence="8">
    <original>V</original>
    <variation>A</variation>
    <location>
        <position position="378"/>
    </location>
</feature>
<feature type="mutagenesis site" description="Abolishes activation of NF-kappa-B." evidence="8">
    <original>F</original>
    <variation>A</variation>
    <location>
        <position position="405"/>
    </location>
</feature>
<feature type="mutagenesis site" description="Abolishes responses to both ssRNA and chemical ligands." evidence="10">
    <original>F</original>
    <variation>A</variation>
    <location>
        <position position="405"/>
    </location>
</feature>
<feature type="mutagenesis site" description="Monomeric and inactive." evidence="11">
    <original>RKRR</original>
    <variation>NQSN</variation>
    <location>
        <begin position="452"/>
        <end position="455"/>
    </location>
</feature>
<feature type="mutagenesis site" description="Strongly decreases activation of NF-kappa-B." evidence="8">
    <original>V</original>
    <variation>A</variation>
    <location>
        <position position="520"/>
    </location>
</feature>
<feature type="mutagenesis site" description="Abolishes activation of NF-kappa-B." evidence="8 16">
    <original>D</original>
    <variation>A</variation>
    <location>
        <position position="543"/>
    </location>
</feature>
<feature type="mutagenesis site" description="Abolishes responses to both ssRNA and chemical ligands." evidence="10">
    <original>D</original>
    <variation>A</variation>
    <location>
        <position position="543"/>
    </location>
</feature>
<feature type="mutagenesis site" description="Abolishes responses to both ssRNA and chemical ligands." evidence="10">
    <original>T</original>
    <variation>A</variation>
    <location>
        <position position="574"/>
    </location>
</feature>
<feature type="mutagenesis site" description="Strongly decreases activation of NF-kappa-B." evidence="8">
    <original>T</original>
    <variation>A</variation>
    <location>
        <position position="574"/>
    </location>
</feature>
<feature type="sequence conflict" description="In Ref. 1; AAF64061." evidence="20" ref="1">
    <original>P</original>
    <variation>S</variation>
    <location>
        <position position="217"/>
    </location>
</feature>
<feature type="sequence conflict" description="In Ref. 5; AAQ88663." evidence="20" ref="5">
    <original>A</original>
    <variation>V</variation>
    <location>
        <position position="328"/>
    </location>
</feature>
<feature type="sequence conflict" description="In Ref. 1; AAF64061." evidence="20" ref="1">
    <original>L</original>
    <variation>P</variation>
    <location>
        <position position="366"/>
    </location>
</feature>
<feature type="sequence conflict" description="In Ref. 4; AAZ95439." evidence="20" ref="4">
    <original>D</original>
    <variation>N</variation>
    <location>
        <position position="410"/>
    </location>
</feature>
<feature type="sequence conflict" description="In Ref. 1; AAF64061." evidence="20" ref="1">
    <original>V</original>
    <variation>I</variation>
    <location>
        <position position="867"/>
    </location>
</feature>
<feature type="strand" evidence="27">
    <location>
        <begin position="37"/>
        <end position="39"/>
    </location>
</feature>
<feature type="strand" evidence="30">
    <location>
        <begin position="42"/>
        <end position="44"/>
    </location>
</feature>
<feature type="strand" evidence="27">
    <location>
        <begin position="46"/>
        <end position="48"/>
    </location>
</feature>
<feature type="strand" evidence="27">
    <location>
        <begin position="66"/>
        <end position="69"/>
    </location>
</feature>
<feature type="turn" evidence="27">
    <location>
        <begin position="80"/>
        <end position="85"/>
    </location>
</feature>
<feature type="strand" evidence="27">
    <location>
        <begin position="91"/>
        <end position="93"/>
    </location>
</feature>
<feature type="strand" evidence="23">
    <location>
        <begin position="96"/>
        <end position="98"/>
    </location>
</feature>
<feature type="turn" evidence="27">
    <location>
        <begin position="118"/>
        <end position="123"/>
    </location>
</feature>
<feature type="strand" evidence="27">
    <location>
        <begin position="129"/>
        <end position="131"/>
    </location>
</feature>
<feature type="strand" evidence="27">
    <location>
        <begin position="149"/>
        <end position="152"/>
    </location>
</feature>
<feature type="helix" evidence="27">
    <location>
        <begin position="163"/>
        <end position="166"/>
    </location>
</feature>
<feature type="strand" evidence="27">
    <location>
        <begin position="174"/>
        <end position="176"/>
    </location>
</feature>
<feature type="strand" evidence="27">
    <location>
        <begin position="179"/>
        <end position="181"/>
    </location>
</feature>
<feature type="strand" evidence="33">
    <location>
        <begin position="183"/>
        <end position="185"/>
    </location>
</feature>
<feature type="turn" evidence="27">
    <location>
        <begin position="194"/>
        <end position="199"/>
    </location>
</feature>
<feature type="strand" evidence="27">
    <location>
        <begin position="205"/>
        <end position="207"/>
    </location>
</feature>
<feature type="strand" evidence="27">
    <location>
        <begin position="225"/>
        <end position="228"/>
    </location>
</feature>
<feature type="strand" evidence="37">
    <location>
        <begin position="230"/>
        <end position="232"/>
    </location>
</feature>
<feature type="turn" evidence="27">
    <location>
        <begin position="241"/>
        <end position="244"/>
    </location>
</feature>
<feature type="strand" evidence="27">
    <location>
        <begin position="250"/>
        <end position="252"/>
    </location>
</feature>
<feature type="strand" evidence="36">
    <location>
        <begin position="260"/>
        <end position="262"/>
    </location>
</feature>
<feature type="helix" evidence="27">
    <location>
        <begin position="271"/>
        <end position="273"/>
    </location>
</feature>
<feature type="turn" evidence="27">
    <location>
        <begin position="280"/>
        <end position="285"/>
    </location>
</feature>
<feature type="strand" evidence="27">
    <location>
        <begin position="291"/>
        <end position="293"/>
    </location>
</feature>
<feature type="helix" evidence="27">
    <location>
        <begin position="304"/>
        <end position="307"/>
    </location>
</feature>
<feature type="strand" evidence="27">
    <location>
        <begin position="315"/>
        <end position="317"/>
    </location>
</feature>
<feature type="strand" evidence="24">
    <location>
        <begin position="320"/>
        <end position="322"/>
    </location>
</feature>
<feature type="helix" evidence="27">
    <location>
        <begin position="324"/>
        <end position="329"/>
    </location>
</feature>
<feature type="helix" evidence="27">
    <location>
        <begin position="331"/>
        <end position="335"/>
    </location>
</feature>
<feature type="strand" evidence="27">
    <location>
        <begin position="341"/>
        <end position="343"/>
    </location>
</feature>
<feature type="helix" evidence="27">
    <location>
        <begin position="361"/>
        <end position="365"/>
    </location>
</feature>
<feature type="strand" evidence="27">
    <location>
        <begin position="371"/>
        <end position="373"/>
    </location>
</feature>
<feature type="strand" evidence="27">
    <location>
        <begin position="380"/>
        <end position="382"/>
    </location>
</feature>
<feature type="helix" evidence="27">
    <location>
        <begin position="384"/>
        <end position="390"/>
    </location>
</feature>
<feature type="strand" evidence="27">
    <location>
        <begin position="398"/>
        <end position="400"/>
    </location>
</feature>
<feature type="strand" evidence="36">
    <location>
        <begin position="407"/>
        <end position="409"/>
    </location>
</feature>
<feature type="helix" evidence="27">
    <location>
        <begin position="411"/>
        <end position="416"/>
    </location>
</feature>
<feature type="strand" evidence="26">
    <location>
        <begin position="417"/>
        <end position="419"/>
    </location>
</feature>
<feature type="strand" evidence="27">
    <location>
        <begin position="421"/>
        <end position="424"/>
    </location>
</feature>
<feature type="strand" evidence="29">
    <location>
        <begin position="459"/>
        <end position="461"/>
    </location>
</feature>
<feature type="strand" evidence="35">
    <location>
        <begin position="463"/>
        <end position="465"/>
    </location>
</feature>
<feature type="strand" evidence="27">
    <location>
        <begin position="467"/>
        <end position="469"/>
    </location>
</feature>
<feature type="helix" evidence="27">
    <location>
        <begin position="477"/>
        <end position="480"/>
    </location>
</feature>
<feature type="strand" evidence="27">
    <location>
        <begin position="485"/>
        <end position="487"/>
    </location>
</feature>
<feature type="strand" evidence="36">
    <location>
        <begin position="490"/>
        <end position="492"/>
    </location>
</feature>
<feature type="turn" evidence="27">
    <location>
        <begin position="498"/>
        <end position="503"/>
    </location>
</feature>
<feature type="strand" evidence="27">
    <location>
        <begin position="508"/>
        <end position="511"/>
    </location>
</feature>
<feature type="turn" evidence="27">
    <location>
        <begin position="525"/>
        <end position="528"/>
    </location>
</feature>
<feature type="strand" evidence="27">
    <location>
        <begin position="533"/>
        <end position="536"/>
    </location>
</feature>
<feature type="turn" evidence="27">
    <location>
        <begin position="547"/>
        <end position="552"/>
    </location>
</feature>
<feature type="strand" evidence="27">
    <location>
        <begin position="558"/>
        <end position="560"/>
    </location>
</feature>
<feature type="helix" evidence="27">
    <location>
        <begin position="565"/>
        <end position="568"/>
    </location>
</feature>
<feature type="turn" evidence="22">
    <location>
        <begin position="571"/>
        <end position="573"/>
    </location>
</feature>
<feature type="helix" evidence="27">
    <location>
        <begin position="578"/>
        <end position="582"/>
    </location>
</feature>
<feature type="strand" evidence="27">
    <location>
        <begin position="588"/>
        <end position="590"/>
    </location>
</feature>
<feature type="strand" evidence="34">
    <location>
        <begin position="599"/>
        <end position="601"/>
    </location>
</feature>
<feature type="strand" evidence="27">
    <location>
        <begin position="607"/>
        <end position="609"/>
    </location>
</feature>
<feature type="strand" evidence="27">
    <location>
        <begin position="612"/>
        <end position="614"/>
    </location>
</feature>
<feature type="helix" evidence="27">
    <location>
        <begin position="620"/>
        <end position="623"/>
    </location>
</feature>
<feature type="strand" evidence="32">
    <location>
        <begin position="626"/>
        <end position="629"/>
    </location>
</feature>
<feature type="turn" evidence="27">
    <location>
        <begin position="630"/>
        <end position="637"/>
    </location>
</feature>
<feature type="strand" evidence="25">
    <location>
        <begin position="638"/>
        <end position="640"/>
    </location>
</feature>
<feature type="strand" evidence="27">
    <location>
        <begin position="643"/>
        <end position="645"/>
    </location>
</feature>
<feature type="helix" evidence="27">
    <location>
        <begin position="656"/>
        <end position="660"/>
    </location>
</feature>
<feature type="strand" evidence="27">
    <location>
        <begin position="667"/>
        <end position="670"/>
    </location>
</feature>
<feature type="helix" evidence="27">
    <location>
        <begin position="681"/>
        <end position="686"/>
    </location>
</feature>
<feature type="strand" evidence="27">
    <location>
        <begin position="692"/>
        <end position="694"/>
    </location>
</feature>
<feature type="helix" evidence="27">
    <location>
        <begin position="707"/>
        <end position="709"/>
    </location>
</feature>
<feature type="strand" evidence="27">
    <location>
        <begin position="716"/>
        <end position="718"/>
    </location>
</feature>
<feature type="turn" evidence="27">
    <location>
        <begin position="729"/>
        <end position="733"/>
    </location>
</feature>
<feature type="strand" evidence="31">
    <location>
        <begin position="734"/>
        <end position="737"/>
    </location>
</feature>
<feature type="strand" evidence="27">
    <location>
        <begin position="740"/>
        <end position="742"/>
    </location>
</feature>
<feature type="helix" evidence="27">
    <location>
        <begin position="753"/>
        <end position="756"/>
    </location>
</feature>
<feature type="strand" evidence="27">
    <location>
        <begin position="758"/>
        <end position="760"/>
    </location>
</feature>
<feature type="strand" evidence="27">
    <location>
        <begin position="765"/>
        <end position="768"/>
    </location>
</feature>
<feature type="helix" evidence="27">
    <location>
        <begin position="778"/>
        <end position="780"/>
    </location>
</feature>
<feature type="helix" evidence="27">
    <location>
        <begin position="781"/>
        <end position="789"/>
    </location>
</feature>
<feature type="turn" evidence="30">
    <location>
        <begin position="790"/>
        <end position="792"/>
    </location>
</feature>
<feature type="helix" evidence="27">
    <location>
        <begin position="798"/>
        <end position="800"/>
    </location>
</feature>
<feature type="strand" evidence="27">
    <location>
        <begin position="801"/>
        <end position="806"/>
    </location>
</feature>
<feature type="turn" evidence="27">
    <location>
        <begin position="807"/>
        <end position="811"/>
    </location>
</feature>
<feature type="helix" evidence="28">
    <location>
        <begin position="814"/>
        <end position="816"/>
    </location>
</feature>
<feature type="helix" evidence="36">
    <location>
        <begin position="819"/>
        <end position="821"/>
    </location>
</feature>
<evidence type="ECO:0000250" key="1"/>
<evidence type="ECO:0000250" key="2">
    <source>
        <dbReference type="UniProtKB" id="P58682"/>
    </source>
</evidence>
<evidence type="ECO:0000255" key="3"/>
<evidence type="ECO:0000255" key="4">
    <source>
        <dbReference type="PROSITE-ProRule" id="PRU00204"/>
    </source>
</evidence>
<evidence type="ECO:0000269" key="5">
    <source>
    </source>
</evidence>
<evidence type="ECO:0000269" key="6">
    <source>
    </source>
</evidence>
<evidence type="ECO:0000269" key="7">
    <source>
    </source>
</evidence>
<evidence type="ECO:0000269" key="8">
    <source>
    </source>
</evidence>
<evidence type="ECO:0000269" key="9">
    <source>
    </source>
</evidence>
<evidence type="ECO:0000269" key="10">
    <source>
    </source>
</evidence>
<evidence type="ECO:0000269" key="11">
    <source>
    </source>
</evidence>
<evidence type="ECO:0000269" key="12">
    <source>
    </source>
</evidence>
<evidence type="ECO:0000269" key="13">
    <source>
    </source>
</evidence>
<evidence type="ECO:0000269" key="14">
    <source>
    </source>
</evidence>
<evidence type="ECO:0000269" key="15">
    <source>
    </source>
</evidence>
<evidence type="ECO:0000269" key="16">
    <source>
    </source>
</evidence>
<evidence type="ECO:0000269" key="17">
    <source>
    </source>
</evidence>
<evidence type="ECO:0000269" key="18">
    <source>
    </source>
</evidence>
<evidence type="ECO:0000303" key="19">
    <source>
    </source>
</evidence>
<evidence type="ECO:0000305" key="20"/>
<evidence type="ECO:0000312" key="21">
    <source>
        <dbReference type="HGNC" id="HGNC:15632"/>
    </source>
</evidence>
<evidence type="ECO:0007829" key="22">
    <source>
        <dbReference type="PDB" id="3W3G"/>
    </source>
</evidence>
<evidence type="ECO:0007829" key="23">
    <source>
        <dbReference type="PDB" id="3W3J"/>
    </source>
</evidence>
<evidence type="ECO:0007829" key="24">
    <source>
        <dbReference type="PDB" id="3W3K"/>
    </source>
</evidence>
<evidence type="ECO:0007829" key="25">
    <source>
        <dbReference type="PDB" id="3W3M"/>
    </source>
</evidence>
<evidence type="ECO:0007829" key="26">
    <source>
        <dbReference type="PDB" id="3W3N"/>
    </source>
</evidence>
<evidence type="ECO:0007829" key="27">
    <source>
        <dbReference type="PDB" id="3WN4"/>
    </source>
</evidence>
<evidence type="ECO:0007829" key="28">
    <source>
        <dbReference type="PDB" id="4QBZ"/>
    </source>
</evidence>
<evidence type="ECO:0007829" key="29">
    <source>
        <dbReference type="PDB" id="4R07"/>
    </source>
</evidence>
<evidence type="ECO:0007829" key="30">
    <source>
        <dbReference type="PDB" id="4R0A"/>
    </source>
</evidence>
<evidence type="ECO:0007829" key="31">
    <source>
        <dbReference type="PDB" id="5AZ5"/>
    </source>
</evidence>
<evidence type="ECO:0007829" key="32">
    <source>
        <dbReference type="PDB" id="5HDH"/>
    </source>
</evidence>
<evidence type="ECO:0007829" key="33">
    <source>
        <dbReference type="PDB" id="5WYX"/>
    </source>
</evidence>
<evidence type="ECO:0007829" key="34">
    <source>
        <dbReference type="PDB" id="5WYZ"/>
    </source>
</evidence>
<evidence type="ECO:0007829" key="35">
    <source>
        <dbReference type="PDB" id="6V9U"/>
    </source>
</evidence>
<evidence type="ECO:0007829" key="36">
    <source>
        <dbReference type="PDB" id="6ZJZ"/>
    </source>
</evidence>
<evidence type="ECO:0007829" key="37">
    <source>
        <dbReference type="PDB" id="7YTX"/>
    </source>
</evidence>